<keyword id="KW-0025">Alternative splicing</keyword>
<keyword id="KW-0131">Cell cycle</keyword>
<keyword id="KW-0338">Growth arrest</keyword>
<keyword id="KW-0597">Phosphoprotein</keyword>
<keyword id="KW-1267">Proteomics identification</keyword>
<keyword id="KW-1185">Reference proteome</keyword>
<keyword id="KW-0833">Ubl conjugation pathway</keyword>
<proteinExistence type="evidence at protein level"/>
<gene>
    <name type="primary">MTBP</name>
</gene>
<feature type="chain" id="PRO_0000323745" description="Mdm2-binding protein">
    <location>
        <begin position="1"/>
        <end position="904"/>
    </location>
</feature>
<feature type="region of interest" description="Disordered" evidence="2">
    <location>
        <begin position="19"/>
        <end position="38"/>
    </location>
</feature>
<feature type="region of interest" description="Interaction with MDM2" evidence="1">
    <location>
        <begin position="521"/>
        <end position="904"/>
    </location>
</feature>
<feature type="region of interest" description="Disordered" evidence="2">
    <location>
        <begin position="754"/>
        <end position="784"/>
    </location>
</feature>
<feature type="region of interest" description="Disordered" evidence="2">
    <location>
        <begin position="800"/>
        <end position="830"/>
    </location>
</feature>
<feature type="compositionally biased region" description="Basic and acidic residues" evidence="2">
    <location>
        <begin position="812"/>
        <end position="830"/>
    </location>
</feature>
<feature type="modified residue" description="Phosphoserine" evidence="9">
    <location>
        <position position="597"/>
    </location>
</feature>
<feature type="modified residue" description="Phosphoserine" evidence="6 8 9">
    <location>
        <position position="639"/>
    </location>
</feature>
<feature type="modified residue" description="Phosphoserine" evidence="7">
    <location>
        <position position="703"/>
    </location>
</feature>
<feature type="modified residue" description="Phosphoserine" evidence="7">
    <location>
        <position position="707"/>
    </location>
</feature>
<feature type="splice variant" id="VSP_056108" description="In isoform 2." evidence="4">
    <original>LGLT</original>
    <variation>FTED</variation>
    <location>
        <begin position="326"/>
        <end position="329"/>
    </location>
</feature>
<feature type="splice variant" id="VSP_056109" description="In isoform 2." evidence="4">
    <location>
        <begin position="330"/>
        <end position="904"/>
    </location>
</feature>
<comment type="function">
    <text evidence="1 3">Inhibits cell migration in vitro and suppresses the invasive behavior of tumor cells (By similarity). May play a role in MDM2-dependent p53/TP53 homeostasis in unstressed cells. Inhibits autoubiquitination of MDM2, thereby enhancing MDM2 stability. This promotes MDM2-mediated ubiquitination of p53/TP53 and its subsequent degradation.</text>
</comment>
<comment type="subunit">
    <text evidence="3">Interacts with MDM2.</text>
</comment>
<comment type="alternative products">
    <event type="alternative splicing"/>
    <isoform>
        <id>Q96DY7-1</id>
        <name>1</name>
        <sequence type="displayed"/>
    </isoform>
    <isoform>
        <id>Q96DY7-3</id>
        <name>2</name>
        <sequence type="described" ref="VSP_056108 VSP_056109"/>
    </isoform>
</comment>
<comment type="similarity">
    <text evidence="5">Belongs to the MTBP family.</text>
</comment>
<comment type="sequence caution" evidence="5">
    <conflict type="miscellaneous discrepancy">
        <sequence resource="EMBL-CDS" id="BAB13965"/>
    </conflict>
    <text>Probable cloning artifact. May result from internal priming due to genomic poly-A tracts.</text>
</comment>
<comment type="sequence caution" evidence="5">
    <conflict type="erroneous gene model prediction">
        <sequence resource="EMBL-CDS" id="EAW92007"/>
    </conflict>
</comment>
<accession>Q96DY7</accession>
<accession>B4DUR5</accession>
<accession>Q9HA89</accession>
<name>MTBP_HUMAN</name>
<reference key="1">
    <citation type="journal article" date="2004" name="Nat. Genet.">
        <title>Complete sequencing and characterization of 21,243 full-length human cDNAs.</title>
        <authorList>
            <person name="Ota T."/>
            <person name="Suzuki Y."/>
            <person name="Nishikawa T."/>
            <person name="Otsuki T."/>
            <person name="Sugiyama T."/>
            <person name="Irie R."/>
            <person name="Wakamatsu A."/>
            <person name="Hayashi K."/>
            <person name="Sato H."/>
            <person name="Nagai K."/>
            <person name="Kimura K."/>
            <person name="Makita H."/>
            <person name="Sekine M."/>
            <person name="Obayashi M."/>
            <person name="Nishi T."/>
            <person name="Shibahara T."/>
            <person name="Tanaka T."/>
            <person name="Ishii S."/>
            <person name="Yamamoto J."/>
            <person name="Saito K."/>
            <person name="Kawai Y."/>
            <person name="Isono Y."/>
            <person name="Nakamura Y."/>
            <person name="Nagahari K."/>
            <person name="Murakami K."/>
            <person name="Yasuda T."/>
            <person name="Iwayanagi T."/>
            <person name="Wagatsuma M."/>
            <person name="Shiratori A."/>
            <person name="Sudo H."/>
            <person name="Hosoiri T."/>
            <person name="Kaku Y."/>
            <person name="Kodaira H."/>
            <person name="Kondo H."/>
            <person name="Sugawara M."/>
            <person name="Takahashi M."/>
            <person name="Kanda K."/>
            <person name="Yokoi T."/>
            <person name="Furuya T."/>
            <person name="Kikkawa E."/>
            <person name="Omura Y."/>
            <person name="Abe K."/>
            <person name="Kamihara K."/>
            <person name="Katsuta N."/>
            <person name="Sato K."/>
            <person name="Tanikawa M."/>
            <person name="Yamazaki M."/>
            <person name="Ninomiya K."/>
            <person name="Ishibashi T."/>
            <person name="Yamashita H."/>
            <person name="Murakawa K."/>
            <person name="Fujimori K."/>
            <person name="Tanai H."/>
            <person name="Kimata M."/>
            <person name="Watanabe M."/>
            <person name="Hiraoka S."/>
            <person name="Chiba Y."/>
            <person name="Ishida S."/>
            <person name="Ono Y."/>
            <person name="Takiguchi S."/>
            <person name="Watanabe S."/>
            <person name="Yosida M."/>
            <person name="Hotuta T."/>
            <person name="Kusano J."/>
            <person name="Kanehori K."/>
            <person name="Takahashi-Fujii A."/>
            <person name="Hara H."/>
            <person name="Tanase T.-O."/>
            <person name="Nomura Y."/>
            <person name="Togiya S."/>
            <person name="Komai F."/>
            <person name="Hara R."/>
            <person name="Takeuchi K."/>
            <person name="Arita M."/>
            <person name="Imose N."/>
            <person name="Musashino K."/>
            <person name="Yuuki H."/>
            <person name="Oshima A."/>
            <person name="Sasaki N."/>
            <person name="Aotsuka S."/>
            <person name="Yoshikawa Y."/>
            <person name="Matsunawa H."/>
            <person name="Ichihara T."/>
            <person name="Shiohata N."/>
            <person name="Sano S."/>
            <person name="Moriya S."/>
            <person name="Momiyama H."/>
            <person name="Satoh N."/>
            <person name="Takami S."/>
            <person name="Terashima Y."/>
            <person name="Suzuki O."/>
            <person name="Nakagawa S."/>
            <person name="Senoh A."/>
            <person name="Mizoguchi H."/>
            <person name="Goto Y."/>
            <person name="Shimizu F."/>
            <person name="Wakebe H."/>
            <person name="Hishigaki H."/>
            <person name="Watanabe T."/>
            <person name="Sugiyama A."/>
            <person name="Takemoto M."/>
            <person name="Kawakami B."/>
            <person name="Yamazaki M."/>
            <person name="Watanabe K."/>
            <person name="Kumagai A."/>
            <person name="Itakura S."/>
            <person name="Fukuzumi Y."/>
            <person name="Fujimori Y."/>
            <person name="Komiyama M."/>
            <person name="Tashiro H."/>
            <person name="Tanigami A."/>
            <person name="Fujiwara T."/>
            <person name="Ono T."/>
            <person name="Yamada K."/>
            <person name="Fujii Y."/>
            <person name="Ozaki K."/>
            <person name="Hirao M."/>
            <person name="Ohmori Y."/>
            <person name="Kawabata A."/>
            <person name="Hikiji T."/>
            <person name="Kobatake N."/>
            <person name="Inagaki H."/>
            <person name="Ikema Y."/>
            <person name="Okamoto S."/>
            <person name="Okitani R."/>
            <person name="Kawakami T."/>
            <person name="Noguchi S."/>
            <person name="Itoh T."/>
            <person name="Shigeta K."/>
            <person name="Senba T."/>
            <person name="Matsumura K."/>
            <person name="Nakajima Y."/>
            <person name="Mizuno T."/>
            <person name="Morinaga M."/>
            <person name="Sasaki M."/>
            <person name="Togashi T."/>
            <person name="Oyama M."/>
            <person name="Hata H."/>
            <person name="Watanabe M."/>
            <person name="Komatsu T."/>
            <person name="Mizushima-Sugano J."/>
            <person name="Satoh T."/>
            <person name="Shirai Y."/>
            <person name="Takahashi Y."/>
            <person name="Nakagawa K."/>
            <person name="Okumura K."/>
            <person name="Nagase T."/>
            <person name="Nomura N."/>
            <person name="Kikuchi H."/>
            <person name="Masuho Y."/>
            <person name="Yamashita R."/>
            <person name="Nakai K."/>
            <person name="Yada T."/>
            <person name="Nakamura Y."/>
            <person name="Ohara O."/>
            <person name="Isogai T."/>
            <person name="Sugano S."/>
        </authorList>
    </citation>
    <scope>NUCLEOTIDE SEQUENCE [LARGE SCALE MRNA] (ISOFORM 2)</scope>
    <scope>NUCLEOTIDE SEQUENCE [LARGE SCALE MRNA] OF 1-141 (ISOFORM 1)</scope>
    <source>
        <tissue>Embryo</tissue>
    </source>
</reference>
<reference key="2">
    <citation type="journal article" date="2006" name="Nature">
        <title>DNA sequence and analysis of human chromosome 8.</title>
        <authorList>
            <person name="Nusbaum C."/>
            <person name="Mikkelsen T.S."/>
            <person name="Zody M.C."/>
            <person name="Asakawa S."/>
            <person name="Taudien S."/>
            <person name="Garber M."/>
            <person name="Kodira C.D."/>
            <person name="Schueler M.G."/>
            <person name="Shimizu A."/>
            <person name="Whittaker C.A."/>
            <person name="Chang J.L."/>
            <person name="Cuomo C.A."/>
            <person name="Dewar K."/>
            <person name="FitzGerald M.G."/>
            <person name="Yang X."/>
            <person name="Allen N.R."/>
            <person name="Anderson S."/>
            <person name="Asakawa T."/>
            <person name="Blechschmidt K."/>
            <person name="Bloom T."/>
            <person name="Borowsky M.L."/>
            <person name="Butler J."/>
            <person name="Cook A."/>
            <person name="Corum B."/>
            <person name="DeArellano K."/>
            <person name="DeCaprio D."/>
            <person name="Dooley K.T."/>
            <person name="Dorris L. III"/>
            <person name="Engels R."/>
            <person name="Gloeckner G."/>
            <person name="Hafez N."/>
            <person name="Hagopian D.S."/>
            <person name="Hall J.L."/>
            <person name="Ishikawa S.K."/>
            <person name="Jaffe D.B."/>
            <person name="Kamat A."/>
            <person name="Kudoh J."/>
            <person name="Lehmann R."/>
            <person name="Lokitsang T."/>
            <person name="Macdonald P."/>
            <person name="Major J.E."/>
            <person name="Matthews C.D."/>
            <person name="Mauceli E."/>
            <person name="Menzel U."/>
            <person name="Mihalev A.H."/>
            <person name="Minoshima S."/>
            <person name="Murayama Y."/>
            <person name="Naylor J.W."/>
            <person name="Nicol R."/>
            <person name="Nguyen C."/>
            <person name="O'Leary S.B."/>
            <person name="O'Neill K."/>
            <person name="Parker S.C.J."/>
            <person name="Polley A."/>
            <person name="Raymond C.K."/>
            <person name="Reichwald K."/>
            <person name="Rodriguez J."/>
            <person name="Sasaki T."/>
            <person name="Schilhabel M."/>
            <person name="Siddiqui R."/>
            <person name="Smith C.L."/>
            <person name="Sneddon T.P."/>
            <person name="Talamas J.A."/>
            <person name="Tenzin P."/>
            <person name="Topham K."/>
            <person name="Venkataraman V."/>
            <person name="Wen G."/>
            <person name="Yamazaki S."/>
            <person name="Young S.K."/>
            <person name="Zeng Q."/>
            <person name="Zimmer A.R."/>
            <person name="Rosenthal A."/>
            <person name="Birren B.W."/>
            <person name="Platzer M."/>
            <person name="Shimizu N."/>
            <person name="Lander E.S."/>
        </authorList>
    </citation>
    <scope>NUCLEOTIDE SEQUENCE [LARGE SCALE GENOMIC DNA]</scope>
</reference>
<reference key="3">
    <citation type="submission" date="2005-07" db="EMBL/GenBank/DDBJ databases">
        <authorList>
            <person name="Mural R.J."/>
            <person name="Istrail S."/>
            <person name="Sutton G.G."/>
            <person name="Florea L."/>
            <person name="Halpern A.L."/>
            <person name="Mobarry C.M."/>
            <person name="Lippert R."/>
            <person name="Walenz B."/>
            <person name="Shatkay H."/>
            <person name="Dew I."/>
            <person name="Miller J.R."/>
            <person name="Flanigan M.J."/>
            <person name="Edwards N.J."/>
            <person name="Bolanos R."/>
            <person name="Fasulo D."/>
            <person name="Halldorsson B.V."/>
            <person name="Hannenhalli S."/>
            <person name="Turner R."/>
            <person name="Yooseph S."/>
            <person name="Lu F."/>
            <person name="Nusskern D.R."/>
            <person name="Shue B.C."/>
            <person name="Zheng X.H."/>
            <person name="Zhong F."/>
            <person name="Delcher A.L."/>
            <person name="Huson D.H."/>
            <person name="Kravitz S.A."/>
            <person name="Mouchard L."/>
            <person name="Reinert K."/>
            <person name="Remington K.A."/>
            <person name="Clark A.G."/>
            <person name="Waterman M.S."/>
            <person name="Eichler E.E."/>
            <person name="Adams M.D."/>
            <person name="Hunkapiller M.W."/>
            <person name="Myers E.W."/>
            <person name="Venter J.C."/>
        </authorList>
    </citation>
    <scope>NUCLEOTIDE SEQUENCE [LARGE SCALE GENOMIC DNA]</scope>
</reference>
<reference key="4">
    <citation type="journal article" date="2004" name="Genome Res.">
        <title>The status, quality, and expansion of the NIH full-length cDNA project: the Mammalian Gene Collection (MGC).</title>
        <authorList>
            <consortium name="The MGC Project Team"/>
        </authorList>
    </citation>
    <scope>NUCLEOTIDE SEQUENCE [LARGE SCALE MRNA] (ISOFORM 1)</scope>
    <source>
        <tissue>Prostate</tissue>
    </source>
</reference>
<reference key="5">
    <citation type="journal article" date="2005" name="Mol. Cell. Biol.">
        <title>Regulation of p53 and MDM2 activity by MTBP.</title>
        <authorList>
            <person name="Brady M."/>
            <person name="Vlatkovic N."/>
            <person name="Boyd M.T."/>
        </authorList>
    </citation>
    <scope>FUNCTION</scope>
    <scope>INTERACTION WITH MDM2</scope>
</reference>
<reference key="6">
    <citation type="journal article" date="2008" name="Proc. Natl. Acad. Sci. U.S.A.">
        <title>A quantitative atlas of mitotic phosphorylation.</title>
        <authorList>
            <person name="Dephoure N."/>
            <person name="Zhou C."/>
            <person name="Villen J."/>
            <person name="Beausoleil S.A."/>
            <person name="Bakalarski C.E."/>
            <person name="Elledge S.J."/>
            <person name="Gygi S.P."/>
        </authorList>
    </citation>
    <scope>PHOSPHORYLATION [LARGE SCALE ANALYSIS] AT SER-639</scope>
    <scope>IDENTIFICATION BY MASS SPECTROMETRY [LARGE SCALE ANALYSIS]</scope>
    <source>
        <tissue>Cervix carcinoma</tissue>
    </source>
</reference>
<reference key="7">
    <citation type="journal article" date="2009" name="Anal. Chem.">
        <title>Lys-N and trypsin cover complementary parts of the phosphoproteome in a refined SCX-based approach.</title>
        <authorList>
            <person name="Gauci S."/>
            <person name="Helbig A.O."/>
            <person name="Slijper M."/>
            <person name="Krijgsveld J."/>
            <person name="Heck A.J."/>
            <person name="Mohammed S."/>
        </authorList>
    </citation>
    <scope>IDENTIFICATION BY MASS SPECTROMETRY [LARGE SCALE ANALYSIS]</scope>
</reference>
<reference key="8">
    <citation type="journal article" date="2009" name="Sci. Signal.">
        <title>Quantitative phosphoproteomic analysis of T cell receptor signaling reveals system-wide modulation of protein-protein interactions.</title>
        <authorList>
            <person name="Mayya V."/>
            <person name="Lundgren D.H."/>
            <person name="Hwang S.-I."/>
            <person name="Rezaul K."/>
            <person name="Wu L."/>
            <person name="Eng J.K."/>
            <person name="Rodionov V."/>
            <person name="Han D.K."/>
        </authorList>
    </citation>
    <scope>PHOSPHORYLATION [LARGE SCALE ANALYSIS] AT SER-703 AND SER-707</scope>
    <scope>IDENTIFICATION BY MASS SPECTROMETRY [LARGE SCALE ANALYSIS]</scope>
    <source>
        <tissue>Leukemic T-cell</tissue>
    </source>
</reference>
<reference key="9">
    <citation type="journal article" date="2010" name="Sci. Signal.">
        <title>Quantitative phosphoproteomics reveals widespread full phosphorylation site occupancy during mitosis.</title>
        <authorList>
            <person name="Olsen J.V."/>
            <person name="Vermeulen M."/>
            <person name="Santamaria A."/>
            <person name="Kumar C."/>
            <person name="Miller M.L."/>
            <person name="Jensen L.J."/>
            <person name="Gnad F."/>
            <person name="Cox J."/>
            <person name="Jensen T.S."/>
            <person name="Nigg E.A."/>
            <person name="Brunak S."/>
            <person name="Mann M."/>
        </authorList>
    </citation>
    <scope>PHOSPHORYLATION [LARGE SCALE ANALYSIS] AT SER-639</scope>
    <scope>IDENTIFICATION BY MASS SPECTROMETRY [LARGE SCALE ANALYSIS]</scope>
    <source>
        <tissue>Cervix carcinoma</tissue>
    </source>
</reference>
<reference key="10">
    <citation type="journal article" date="2013" name="J. Proteome Res.">
        <title>Toward a comprehensive characterization of a human cancer cell phosphoproteome.</title>
        <authorList>
            <person name="Zhou H."/>
            <person name="Di Palma S."/>
            <person name="Preisinger C."/>
            <person name="Peng M."/>
            <person name="Polat A.N."/>
            <person name="Heck A.J."/>
            <person name="Mohammed S."/>
        </authorList>
    </citation>
    <scope>PHOSPHORYLATION [LARGE SCALE ANALYSIS] AT SER-597 AND SER-639</scope>
    <scope>IDENTIFICATION BY MASS SPECTROMETRY [LARGE SCALE ANALYSIS]</scope>
    <source>
        <tissue>Cervix carcinoma</tissue>
        <tissue>Erythroleukemia</tissue>
    </source>
</reference>
<evidence type="ECO:0000250" key="1"/>
<evidence type="ECO:0000256" key="2">
    <source>
        <dbReference type="SAM" id="MobiDB-lite"/>
    </source>
</evidence>
<evidence type="ECO:0000269" key="3">
    <source>
    </source>
</evidence>
<evidence type="ECO:0000303" key="4">
    <source>
    </source>
</evidence>
<evidence type="ECO:0000305" key="5"/>
<evidence type="ECO:0007744" key="6">
    <source>
    </source>
</evidence>
<evidence type="ECO:0007744" key="7">
    <source>
    </source>
</evidence>
<evidence type="ECO:0007744" key="8">
    <source>
    </source>
</evidence>
<evidence type="ECO:0007744" key="9">
    <source>
    </source>
</evidence>
<organism>
    <name type="scientific">Homo sapiens</name>
    <name type="common">Human</name>
    <dbReference type="NCBI Taxonomy" id="9606"/>
    <lineage>
        <taxon>Eukaryota</taxon>
        <taxon>Metazoa</taxon>
        <taxon>Chordata</taxon>
        <taxon>Craniata</taxon>
        <taxon>Vertebrata</taxon>
        <taxon>Euteleostomi</taxon>
        <taxon>Mammalia</taxon>
        <taxon>Eutheria</taxon>
        <taxon>Euarchontoglires</taxon>
        <taxon>Primates</taxon>
        <taxon>Haplorrhini</taxon>
        <taxon>Catarrhini</taxon>
        <taxon>Hominidae</taxon>
        <taxon>Homo</taxon>
    </lineage>
</organism>
<dbReference type="EMBL" id="AK022122">
    <property type="protein sequence ID" value="BAB13965.1"/>
    <property type="status" value="ALT_SEQ"/>
    <property type="molecule type" value="mRNA"/>
</dbReference>
<dbReference type="EMBL" id="AK300762">
    <property type="protein sequence ID" value="BAG62427.1"/>
    <property type="molecule type" value="mRNA"/>
</dbReference>
<dbReference type="EMBL" id="AC105142">
    <property type="status" value="NOT_ANNOTATED_CDS"/>
    <property type="molecule type" value="Genomic_DNA"/>
</dbReference>
<dbReference type="EMBL" id="AC107877">
    <property type="status" value="NOT_ANNOTATED_CDS"/>
    <property type="molecule type" value="Genomic_DNA"/>
</dbReference>
<dbReference type="EMBL" id="CH471060">
    <property type="protein sequence ID" value="EAW92006.1"/>
    <property type="molecule type" value="Genomic_DNA"/>
</dbReference>
<dbReference type="EMBL" id="CH471060">
    <property type="protein sequence ID" value="EAW92007.1"/>
    <property type="status" value="ALT_SEQ"/>
    <property type="molecule type" value="Genomic_DNA"/>
</dbReference>
<dbReference type="EMBL" id="BC013136">
    <property type="protein sequence ID" value="AAH13136.1"/>
    <property type="molecule type" value="mRNA"/>
</dbReference>
<dbReference type="CCDS" id="CCDS6333.1">
    <molecule id="Q96DY7-1"/>
</dbReference>
<dbReference type="RefSeq" id="NP_071328.2">
    <molecule id="Q96DY7-1"/>
    <property type="nucleotide sequence ID" value="NM_022045.4"/>
</dbReference>
<dbReference type="BioGRID" id="117988">
    <property type="interactions" value="42"/>
</dbReference>
<dbReference type="FunCoup" id="Q96DY7">
    <property type="interactions" value="812"/>
</dbReference>
<dbReference type="IntAct" id="Q96DY7">
    <property type="interactions" value="16"/>
</dbReference>
<dbReference type="STRING" id="9606.ENSP00000303398"/>
<dbReference type="GlyGen" id="Q96DY7">
    <property type="glycosylation" value="2 sites, 1 O-linked glycan (2 sites)"/>
</dbReference>
<dbReference type="iPTMnet" id="Q96DY7"/>
<dbReference type="PhosphoSitePlus" id="Q96DY7"/>
<dbReference type="BioMuta" id="MTBP"/>
<dbReference type="DMDM" id="74731509"/>
<dbReference type="jPOST" id="Q96DY7"/>
<dbReference type="MassIVE" id="Q96DY7"/>
<dbReference type="PaxDb" id="9606-ENSP00000303398"/>
<dbReference type="PeptideAtlas" id="Q96DY7"/>
<dbReference type="ProteomicsDB" id="5205"/>
<dbReference type="ProteomicsDB" id="76343">
    <molecule id="Q96DY7-1"/>
</dbReference>
<dbReference type="Antibodypedia" id="13747">
    <property type="antibodies" value="265 antibodies from 29 providers"/>
</dbReference>
<dbReference type="DNASU" id="27085"/>
<dbReference type="Ensembl" id="ENST00000305949.6">
    <molecule id="Q96DY7-1"/>
    <property type="protein sequence ID" value="ENSP00000303398.1"/>
    <property type="gene ID" value="ENSG00000172167.8"/>
</dbReference>
<dbReference type="Ensembl" id="ENST00000523373.5">
    <molecule id="Q96DY7-3"/>
    <property type="protein sequence ID" value="ENSP00000430771.1"/>
    <property type="gene ID" value="ENSG00000172167.8"/>
</dbReference>
<dbReference type="GeneID" id="27085"/>
<dbReference type="KEGG" id="hsa:27085"/>
<dbReference type="MANE-Select" id="ENST00000305949.6">
    <property type="protein sequence ID" value="ENSP00000303398.1"/>
    <property type="RefSeq nucleotide sequence ID" value="NM_022045.5"/>
    <property type="RefSeq protein sequence ID" value="NP_071328.2"/>
</dbReference>
<dbReference type="UCSC" id="uc003ypc.3">
    <molecule id="Q96DY7-1"/>
    <property type="organism name" value="human"/>
</dbReference>
<dbReference type="AGR" id="HGNC:7417"/>
<dbReference type="CTD" id="27085"/>
<dbReference type="DisGeNET" id="27085"/>
<dbReference type="GeneCards" id="MTBP"/>
<dbReference type="HGNC" id="HGNC:7417">
    <property type="gene designation" value="MTBP"/>
</dbReference>
<dbReference type="HPA" id="ENSG00000172167">
    <property type="expression patterns" value="Low tissue specificity"/>
</dbReference>
<dbReference type="MalaCards" id="MTBP"/>
<dbReference type="MIM" id="605927">
    <property type="type" value="gene"/>
</dbReference>
<dbReference type="neXtProt" id="NX_Q96DY7"/>
<dbReference type="OpenTargets" id="ENSG00000172167"/>
<dbReference type="PharmGKB" id="PA31224"/>
<dbReference type="VEuPathDB" id="HostDB:ENSG00000172167"/>
<dbReference type="eggNOG" id="ENOG502RGBH">
    <property type="taxonomic scope" value="Eukaryota"/>
</dbReference>
<dbReference type="GeneTree" id="ENSGT00390000003305"/>
<dbReference type="HOGENOM" id="CLU_923010_0_0_1"/>
<dbReference type="InParanoid" id="Q96DY7"/>
<dbReference type="OMA" id="HFYGEQI"/>
<dbReference type="OrthoDB" id="8633268at2759"/>
<dbReference type="PAN-GO" id="Q96DY7">
    <property type="GO annotations" value="3 GO annotations based on evolutionary models"/>
</dbReference>
<dbReference type="PhylomeDB" id="Q96DY7"/>
<dbReference type="TreeFam" id="TF331503"/>
<dbReference type="PathwayCommons" id="Q96DY7"/>
<dbReference type="SignaLink" id="Q96DY7"/>
<dbReference type="BioGRID-ORCS" id="27085">
    <property type="hits" value="737 hits in 1173 CRISPR screens"/>
</dbReference>
<dbReference type="ChiTaRS" id="MTBP">
    <property type="organism name" value="human"/>
</dbReference>
<dbReference type="GenomeRNAi" id="27085"/>
<dbReference type="Pharos" id="Q96DY7">
    <property type="development level" value="Tbio"/>
</dbReference>
<dbReference type="PRO" id="PR:Q96DY7"/>
<dbReference type="Proteomes" id="UP000005640">
    <property type="component" value="Chromosome 8"/>
</dbReference>
<dbReference type="RNAct" id="Q96DY7">
    <property type="molecule type" value="protein"/>
</dbReference>
<dbReference type="Bgee" id="ENSG00000172167">
    <property type="expression patterns" value="Expressed in male germ line stem cell (sensu Vertebrata) in testis and 100 other cell types or tissues"/>
</dbReference>
<dbReference type="ExpressionAtlas" id="Q96DY7">
    <property type="expression patterns" value="baseline and differential"/>
</dbReference>
<dbReference type="GO" id="GO:0000785">
    <property type="term" value="C:chromatin"/>
    <property type="evidence" value="ECO:0000314"/>
    <property type="project" value="MGI"/>
</dbReference>
<dbReference type="GO" id="GO:0000776">
    <property type="term" value="C:kinetochore"/>
    <property type="evidence" value="ECO:0000314"/>
    <property type="project" value="MGI"/>
</dbReference>
<dbReference type="GO" id="GO:0008285">
    <property type="term" value="P:negative regulation of cell population proliferation"/>
    <property type="evidence" value="ECO:0007669"/>
    <property type="project" value="Ensembl"/>
</dbReference>
<dbReference type="GO" id="GO:0045839">
    <property type="term" value="P:negative regulation of mitotic nuclear division"/>
    <property type="evidence" value="ECO:0007669"/>
    <property type="project" value="Ensembl"/>
</dbReference>
<dbReference type="GO" id="GO:0034501">
    <property type="term" value="P:protein localization to kinetochore"/>
    <property type="evidence" value="ECO:0000315"/>
    <property type="project" value="MGI"/>
</dbReference>
<dbReference type="GO" id="GO:0031396">
    <property type="term" value="P:regulation of protein ubiquitination"/>
    <property type="evidence" value="ECO:0007669"/>
    <property type="project" value="InterPro"/>
</dbReference>
<dbReference type="GO" id="GO:0007089">
    <property type="term" value="P:traversing start control point of mitotic cell cycle"/>
    <property type="evidence" value="ECO:0000318"/>
    <property type="project" value="GO_Central"/>
</dbReference>
<dbReference type="InterPro" id="IPR039061">
    <property type="entry name" value="MTBP"/>
</dbReference>
<dbReference type="InterPro" id="IPR029418">
    <property type="entry name" value="MTBP_C"/>
</dbReference>
<dbReference type="InterPro" id="IPR029420">
    <property type="entry name" value="MTBP_central"/>
</dbReference>
<dbReference type="InterPro" id="IPR029421">
    <property type="entry name" value="MTBP_N"/>
</dbReference>
<dbReference type="PANTHER" id="PTHR14382">
    <property type="entry name" value="MDM2-BINDING PROTEIN"/>
    <property type="match status" value="1"/>
</dbReference>
<dbReference type="PANTHER" id="PTHR14382:SF1">
    <property type="entry name" value="MDM2-BINDING PROTEIN"/>
    <property type="match status" value="1"/>
</dbReference>
<dbReference type="Pfam" id="PF14920">
    <property type="entry name" value="MTBP_C"/>
    <property type="match status" value="1"/>
</dbReference>
<dbReference type="Pfam" id="PF14919">
    <property type="entry name" value="MTBP_mid"/>
    <property type="match status" value="1"/>
</dbReference>
<dbReference type="Pfam" id="PF14918">
    <property type="entry name" value="MTBP_N"/>
    <property type="match status" value="1"/>
</dbReference>
<protein>
    <recommendedName>
        <fullName>Mdm2-binding protein</fullName>
        <shortName>hMTBP</shortName>
    </recommendedName>
</protein>
<sequence>MDRYLLLVIWGEGKFPSAASREAEHGPEVSSGEGTENQPDFTAANVYHLLKRSISASINPEDSTFPACSVGGIPGSKKWFFAVQAIYGFYQFCSSDWQEIHFDTEKDKIEDVLQTNIEECLGAVECFEEEDSNSRESLSLADLYEEAAENLHQLSDKLPAPGRAMVDIILLLSDKDPPKLKDYLPTVGALKHLREWYSAKITIAGNHCEINCQKIAEYLSANVVSLEDLRNVIDSKELWRGKIQIWERKFGFEISFPEFCLKGVTLKNFSTSNLNTDFLAKKIIPSKDKNILPKVFHYYGPALEFVQMIKLSDLPSCYMSDIEFELGLTNSTKQNSVLLLEQISSLCSKVGALFVLPCTISNILIPPPNQLSSRKWKEYIAKKPKTISVPDVEVKGECSSYYLLLQGNGNRRCKATLIHSANQINGSFALNLIHGKMKTKTEEAKLSFPFDLLSLPHFSGEQIVQREKQLANVQVLALEECLKRRKLAKQPETVSVAELKSLLVLTRKHFLDYFDAVIPKMILRKMDKIKTFNILNDFSPVEPNSSSLMETNPLEWPERHVLQNLETFEKTKQKMRTGSLPHSSEQLLGHKEGPRDSITLLDAKELLKYFTSDGLPIGDLQPLPIQKGEKTFVLTPELSPGKLQVLPFEKASVCHYHGIEYCLDDRKALERDGGFSELQSRLIRYETQTTCTRESFPVPTVLSPLPSPVVSSDPGSVPDGEVLQNELRTEVSRLKRRSKDLNCLYPRKRLVKSESSESLLSQTTGNSNHYHHHVTSRKPQTERSLPVTCPLVPIPSCETPKLATKTSSGQKSMHESKTSRQIKESRSQKHTRILKEVVTETLKKHSITETHECFTACSQRLFEISKFYLKDLKTSRGLFEEMKKTANNNAVQVIDWVLEKTSKK</sequence>